<feature type="chain" id="PRO_0000241829" description="UPF0178 protein Sde_3033">
    <location>
        <begin position="1"/>
        <end position="151"/>
    </location>
</feature>
<organism>
    <name type="scientific">Saccharophagus degradans (strain 2-40 / ATCC 43961 / DSM 17024)</name>
    <dbReference type="NCBI Taxonomy" id="203122"/>
    <lineage>
        <taxon>Bacteria</taxon>
        <taxon>Pseudomonadati</taxon>
        <taxon>Pseudomonadota</taxon>
        <taxon>Gammaproteobacteria</taxon>
        <taxon>Cellvibrionales</taxon>
        <taxon>Cellvibrionaceae</taxon>
        <taxon>Saccharophagus</taxon>
    </lineage>
</organism>
<proteinExistence type="inferred from homology"/>
<evidence type="ECO:0000255" key="1">
    <source>
        <dbReference type="HAMAP-Rule" id="MF_00489"/>
    </source>
</evidence>
<reference key="1">
    <citation type="journal article" date="2008" name="PLoS Genet.">
        <title>Complete genome sequence of the complex carbohydrate-degrading marine bacterium, Saccharophagus degradans strain 2-40 T.</title>
        <authorList>
            <person name="Weiner R.M."/>
            <person name="Taylor L.E. II"/>
            <person name="Henrissat B."/>
            <person name="Hauser L."/>
            <person name="Land M."/>
            <person name="Coutinho P.M."/>
            <person name="Rancurel C."/>
            <person name="Saunders E.H."/>
            <person name="Longmire A.G."/>
            <person name="Zhang H."/>
            <person name="Bayer E.A."/>
            <person name="Gilbert H.J."/>
            <person name="Larimer F."/>
            <person name="Zhulin I.B."/>
            <person name="Ekborg N.A."/>
            <person name="Lamed R."/>
            <person name="Richardson P.M."/>
            <person name="Borovok I."/>
            <person name="Hutcheson S."/>
        </authorList>
    </citation>
    <scope>NUCLEOTIDE SEQUENCE [LARGE SCALE GENOMIC DNA]</scope>
    <source>
        <strain>2-40 / ATCC 43961 / DSM 17024</strain>
    </source>
</reference>
<comment type="similarity">
    <text evidence="1">Belongs to the UPF0178 family.</text>
</comment>
<protein>
    <recommendedName>
        <fullName evidence="1">UPF0178 protein Sde_3033</fullName>
    </recommendedName>
</protein>
<accession>Q21G89</accession>
<sequence>MRVWVDADACPNMIKEVLFRAAQRRKVQVTLVANQPLKVIPSPFIKAIQVSAGFDVADNYIVEQVEAGDLIITADIPLAAEAIEKGGLVISPRGELLTAENIRPRLNMRDFLEQMRSSGEHTGGPAALTANDKQAFANALDRLITKGLKDS</sequence>
<gene>
    <name type="ordered locus">Sde_3033</name>
</gene>
<dbReference type="EMBL" id="CP000282">
    <property type="protein sequence ID" value="ABD82290.1"/>
    <property type="molecule type" value="Genomic_DNA"/>
</dbReference>
<dbReference type="RefSeq" id="WP_011469506.1">
    <property type="nucleotide sequence ID" value="NC_007912.1"/>
</dbReference>
<dbReference type="GeneID" id="98614668"/>
<dbReference type="KEGG" id="sde:Sde_3033"/>
<dbReference type="eggNOG" id="COG1671">
    <property type="taxonomic scope" value="Bacteria"/>
</dbReference>
<dbReference type="HOGENOM" id="CLU_106619_2_1_6"/>
<dbReference type="OrthoDB" id="9798918at2"/>
<dbReference type="Proteomes" id="UP000001947">
    <property type="component" value="Chromosome"/>
</dbReference>
<dbReference type="CDD" id="cd18720">
    <property type="entry name" value="PIN_YqxD-like"/>
    <property type="match status" value="1"/>
</dbReference>
<dbReference type="HAMAP" id="MF_00489">
    <property type="entry name" value="UPF0178"/>
    <property type="match status" value="1"/>
</dbReference>
<dbReference type="InterPro" id="IPR003791">
    <property type="entry name" value="UPF0178"/>
</dbReference>
<dbReference type="NCBIfam" id="NF001095">
    <property type="entry name" value="PRK00124.1"/>
    <property type="match status" value="1"/>
</dbReference>
<dbReference type="PANTHER" id="PTHR35146">
    <property type="entry name" value="UPF0178 PROTEIN YAII"/>
    <property type="match status" value="1"/>
</dbReference>
<dbReference type="PANTHER" id="PTHR35146:SF1">
    <property type="entry name" value="UPF0178 PROTEIN YAII"/>
    <property type="match status" value="1"/>
</dbReference>
<dbReference type="Pfam" id="PF02639">
    <property type="entry name" value="DUF188"/>
    <property type="match status" value="1"/>
</dbReference>
<keyword id="KW-1185">Reference proteome</keyword>
<name>Y3033_SACD2</name>